<evidence type="ECO:0000255" key="1">
    <source>
        <dbReference type="HAMAP-Rule" id="MF_01420"/>
    </source>
</evidence>
<evidence type="ECO:0000269" key="2">
    <source>
    </source>
</evidence>
<evidence type="ECO:0000303" key="3">
    <source>
    </source>
</evidence>
<evidence type="ECO:0000305" key="4"/>
<evidence type="ECO:0000312" key="5">
    <source>
        <dbReference type="EMBL" id="AAD36775.1"/>
    </source>
</evidence>
<evidence type="ECO:0007744" key="6">
    <source>
        <dbReference type="PDB" id="3HYI"/>
    </source>
</evidence>
<evidence type="ECO:0007744" key="7">
    <source>
        <dbReference type="PDB" id="3HYJ"/>
    </source>
</evidence>
<evidence type="ECO:0007829" key="8">
    <source>
        <dbReference type="PDB" id="3HYI"/>
    </source>
</evidence>
<evidence type="ECO:0007829" key="9">
    <source>
        <dbReference type="PDB" id="3HYJ"/>
    </source>
</evidence>
<organism>
    <name type="scientific">Thermotoga maritima (strain ATCC 43589 / DSM 3109 / JCM 10099 / NBRC 100826 / MSB8)</name>
    <dbReference type="NCBI Taxonomy" id="243274"/>
    <lineage>
        <taxon>Bacteria</taxon>
        <taxon>Thermotogati</taxon>
        <taxon>Thermotogota</taxon>
        <taxon>Thermotogae</taxon>
        <taxon>Thermotogales</taxon>
        <taxon>Thermotogaceae</taxon>
        <taxon>Thermotoga</taxon>
    </lineage>
</organism>
<proteinExistence type="evidence at protein level"/>
<gene>
    <name evidence="1 3" type="primary">whiA</name>
    <name evidence="5" type="ordered locus">TM_1708</name>
</gene>
<comment type="function">
    <text evidence="1">Involved in cell division and chromosome segregation.</text>
</comment>
<comment type="domain">
    <text evidence="2">Contains a degenerated N-terminal LAGLIDADG homing endonuclease (LHE) domain, a linker region and a C-terminal helix-turn-helix (HTH) domain.</text>
</comment>
<comment type="similarity">
    <text evidence="1">Belongs to the WhiA family.</text>
</comment>
<keyword id="KW-0002">3D-structure</keyword>
<keyword id="KW-0131">Cell cycle</keyword>
<keyword id="KW-0132">Cell division</keyword>
<keyword id="KW-0238">DNA-binding</keyword>
<keyword id="KW-1185">Reference proteome</keyword>
<name>WHIA_THEMA</name>
<reference key="1">
    <citation type="journal article" date="1999" name="Nature">
        <title>Evidence for lateral gene transfer between Archaea and Bacteria from genome sequence of Thermotoga maritima.</title>
        <authorList>
            <person name="Nelson K.E."/>
            <person name="Clayton R.A."/>
            <person name="Gill S.R."/>
            <person name="Gwinn M.L."/>
            <person name="Dodson R.J."/>
            <person name="Haft D.H."/>
            <person name="Hickey E.K."/>
            <person name="Peterson J.D."/>
            <person name="Nelson W.C."/>
            <person name="Ketchum K.A."/>
            <person name="McDonald L.A."/>
            <person name="Utterback T.R."/>
            <person name="Malek J.A."/>
            <person name="Linher K.D."/>
            <person name="Garrett M.M."/>
            <person name="Stewart A.M."/>
            <person name="Cotton M.D."/>
            <person name="Pratt M.S."/>
            <person name="Phillips C.A."/>
            <person name="Richardson D.L."/>
            <person name="Heidelberg J.F."/>
            <person name="Sutton G.G."/>
            <person name="Fleischmann R.D."/>
            <person name="Eisen J.A."/>
            <person name="White O."/>
            <person name="Salzberg S.L."/>
            <person name="Smith H.O."/>
            <person name="Venter J.C."/>
            <person name="Fraser C.M."/>
        </authorList>
    </citation>
    <scope>NUCLEOTIDE SEQUENCE [LARGE SCALE GENOMIC DNA]</scope>
    <source>
        <strain>ATCC 43589 / DSM 3109 / JCM 10099 / NBRC 100826 / MSB8</strain>
    </source>
</reference>
<reference evidence="6 7" key="2">
    <citation type="journal article" date="2009" name="Structure">
        <title>The structure of a bacterial DUF199/WhiA protein: domestication of an invasive endonuclease.</title>
        <authorList>
            <person name="Kaiser B.K."/>
            <person name="Clifton M.C."/>
            <person name="Shen B.W."/>
            <person name="Stoddard B.L."/>
        </authorList>
    </citation>
    <scope>X-RAY CRYSTALLOGRAPHY (2.34 ANGSTROMS)</scope>
    <scope>DOMAIN</scope>
</reference>
<dbReference type="EMBL" id="AE000512">
    <property type="protein sequence ID" value="AAD36775.1"/>
    <property type="molecule type" value="Genomic_DNA"/>
</dbReference>
<dbReference type="PIR" id="F72221">
    <property type="entry name" value="F72221"/>
</dbReference>
<dbReference type="RefSeq" id="NP_229508.1">
    <property type="nucleotide sequence ID" value="NC_000853.1"/>
</dbReference>
<dbReference type="PDB" id="3HYI">
    <property type="method" value="X-ray"/>
    <property type="resolution" value="2.34 A"/>
    <property type="chains" value="A=1-295"/>
</dbReference>
<dbReference type="PDB" id="3HYJ">
    <property type="method" value="X-ray"/>
    <property type="resolution" value="2.60 A"/>
    <property type="chains" value="A/D=1-198"/>
</dbReference>
<dbReference type="PDBsum" id="3HYI"/>
<dbReference type="PDBsum" id="3HYJ"/>
<dbReference type="SMR" id="Q9X234"/>
<dbReference type="FunCoup" id="Q9X234">
    <property type="interactions" value="16"/>
</dbReference>
<dbReference type="STRING" id="243274.TM_1708"/>
<dbReference type="PaxDb" id="243274-THEMA_05700"/>
<dbReference type="EnsemblBacteria" id="AAD36775">
    <property type="protein sequence ID" value="AAD36775"/>
    <property type="gene ID" value="TM_1708"/>
</dbReference>
<dbReference type="KEGG" id="tma:TM1708"/>
<dbReference type="KEGG" id="tmi:THEMA_05700"/>
<dbReference type="PATRIC" id="fig|243274.18.peg.1101"/>
<dbReference type="InParanoid" id="Q9X234"/>
<dbReference type="OrthoDB" id="401278at2"/>
<dbReference type="EvolutionaryTrace" id="Q9X234"/>
<dbReference type="Proteomes" id="UP000008183">
    <property type="component" value="Chromosome"/>
</dbReference>
<dbReference type="GO" id="GO:0003677">
    <property type="term" value="F:DNA binding"/>
    <property type="evidence" value="ECO:0007669"/>
    <property type="project" value="UniProtKB-UniRule"/>
</dbReference>
<dbReference type="GO" id="GO:0051301">
    <property type="term" value="P:cell division"/>
    <property type="evidence" value="ECO:0007669"/>
    <property type="project" value="UniProtKB-UniRule"/>
</dbReference>
<dbReference type="GO" id="GO:0043937">
    <property type="term" value="P:regulation of sporulation"/>
    <property type="evidence" value="ECO:0000318"/>
    <property type="project" value="GO_Central"/>
</dbReference>
<dbReference type="Gene3D" id="3.10.28.10">
    <property type="entry name" value="Homing endonucleases"/>
    <property type="match status" value="1"/>
</dbReference>
<dbReference type="HAMAP" id="MF_01420">
    <property type="entry name" value="HTH_type_WhiA"/>
    <property type="match status" value="1"/>
</dbReference>
<dbReference type="InterPro" id="IPR027434">
    <property type="entry name" value="Homing_endonucl"/>
</dbReference>
<dbReference type="InterPro" id="IPR018478">
    <property type="entry name" value="Sporu_reg_WhiA_N_dom"/>
</dbReference>
<dbReference type="InterPro" id="IPR003802">
    <property type="entry name" value="Sporulation_regulator_WhiA"/>
</dbReference>
<dbReference type="InterPro" id="IPR023054">
    <property type="entry name" value="Sporulation_regulator_WhiA_C"/>
</dbReference>
<dbReference type="InterPro" id="IPR039518">
    <property type="entry name" value="WhiA_LAGLIDADG_dom"/>
</dbReference>
<dbReference type="NCBIfam" id="TIGR00647">
    <property type="entry name" value="DNA_bind_WhiA"/>
    <property type="match status" value="1"/>
</dbReference>
<dbReference type="PANTHER" id="PTHR37307">
    <property type="entry name" value="CELL DIVISION PROTEIN WHIA-RELATED"/>
    <property type="match status" value="1"/>
</dbReference>
<dbReference type="PANTHER" id="PTHR37307:SF1">
    <property type="entry name" value="CELL DIVISION PROTEIN WHIA-RELATED"/>
    <property type="match status" value="1"/>
</dbReference>
<dbReference type="Pfam" id="PF02650">
    <property type="entry name" value="HTH_WhiA"/>
    <property type="match status" value="1"/>
</dbReference>
<dbReference type="Pfam" id="PF14527">
    <property type="entry name" value="LAGLIDADG_WhiA"/>
    <property type="match status" value="1"/>
</dbReference>
<dbReference type="Pfam" id="PF10298">
    <property type="entry name" value="WhiA_N"/>
    <property type="match status" value="1"/>
</dbReference>
<dbReference type="SUPFAM" id="SSF55608">
    <property type="entry name" value="Homing endonucleases"/>
    <property type="match status" value="1"/>
</dbReference>
<accession>Q9X234</accession>
<sequence length="295" mass="34244">MVSLLRRTFSEEIKEELVNVPFGSREEVISELLGFIKARGDLDVKSRHIVFSLHSFAASRRLLNLMKYLSKPVSEIIVEKSHNIKKRYIKITAEYSESFMVIEPFFDVALFVSFLRGLFLSGGSMTNPRYHYHLEINLFEEETLALTRKSLKDFFNINAGIIELRNTRKLYIKSIKDILVFLEAIGVQRKLEEIDRIVTERKVIGDVNRTVNFIEANAIRTANSTARQIRAIELIKENMGLENLPEDLRRVALVRLRNKELSLRELGKKLNLTKSQIYSKLKRIIKIAERFGDVK</sequence>
<feature type="chain" id="PRO_0000445017" description="Probable cell division protein WhiA">
    <location>
        <begin position="1"/>
        <end position="295"/>
    </location>
</feature>
<feature type="DNA-binding region" description="H-T-H motif" evidence="1">
    <location>
        <begin position="262"/>
        <end position="293"/>
    </location>
</feature>
<feature type="helix" evidence="8">
    <location>
        <begin position="9"/>
        <end position="16"/>
    </location>
</feature>
<feature type="turn" evidence="8">
    <location>
        <begin position="17"/>
        <end position="19"/>
    </location>
</feature>
<feature type="helix" evidence="8">
    <location>
        <begin position="25"/>
        <end position="39"/>
    </location>
</feature>
<feature type="strand" evidence="8">
    <location>
        <begin position="40"/>
        <end position="43"/>
    </location>
</feature>
<feature type="turn" evidence="8">
    <location>
        <begin position="44"/>
        <end position="47"/>
    </location>
</feature>
<feature type="strand" evidence="8">
    <location>
        <begin position="48"/>
        <end position="54"/>
    </location>
</feature>
<feature type="helix" evidence="8">
    <location>
        <begin position="56"/>
        <end position="68"/>
    </location>
</feature>
<feature type="strand" evidence="8">
    <location>
        <begin position="73"/>
        <end position="79"/>
    </location>
</feature>
<feature type="strand" evidence="9">
    <location>
        <begin position="83"/>
        <end position="86"/>
    </location>
</feature>
<feature type="strand" evidence="8">
    <location>
        <begin position="88"/>
        <end position="94"/>
    </location>
</feature>
<feature type="helix" evidence="8">
    <location>
        <begin position="97"/>
        <end position="100"/>
    </location>
</feature>
<feature type="strand" evidence="9">
    <location>
        <begin position="105"/>
        <end position="107"/>
    </location>
</feature>
<feature type="helix" evidence="8">
    <location>
        <begin position="108"/>
        <end position="122"/>
    </location>
</feature>
<feature type="strand" evidence="8">
    <location>
        <begin position="123"/>
        <end position="125"/>
    </location>
</feature>
<feature type="turn" evidence="8">
    <location>
        <begin position="128"/>
        <end position="130"/>
    </location>
</feature>
<feature type="strand" evidence="8">
    <location>
        <begin position="134"/>
        <end position="139"/>
    </location>
</feature>
<feature type="helix" evidence="8">
    <location>
        <begin position="141"/>
        <end position="155"/>
    </location>
</feature>
<feature type="strand" evidence="8">
    <location>
        <begin position="160"/>
        <end position="163"/>
    </location>
</feature>
<feature type="strand" evidence="8">
    <location>
        <begin position="168"/>
        <end position="172"/>
    </location>
</feature>
<feature type="helix" evidence="8">
    <location>
        <begin position="175"/>
        <end position="184"/>
    </location>
</feature>
<feature type="helix" evidence="8">
    <location>
        <begin position="189"/>
        <end position="201"/>
    </location>
</feature>
<feature type="helix" evidence="8">
    <location>
        <begin position="207"/>
        <end position="238"/>
    </location>
</feature>
<feature type="helix" evidence="8">
    <location>
        <begin position="241"/>
        <end position="243"/>
    </location>
</feature>
<feature type="helix" evidence="8">
    <location>
        <begin position="246"/>
        <end position="257"/>
    </location>
</feature>
<feature type="helix" evidence="8">
    <location>
        <begin position="263"/>
        <end position="268"/>
    </location>
</feature>
<feature type="turn" evidence="8">
    <location>
        <begin position="269"/>
        <end position="271"/>
    </location>
</feature>
<feature type="helix" evidence="8">
    <location>
        <begin position="274"/>
        <end position="288"/>
    </location>
</feature>
<feature type="turn" evidence="8">
    <location>
        <begin position="289"/>
        <end position="291"/>
    </location>
</feature>
<protein>
    <recommendedName>
        <fullName evidence="1 4">Probable cell division protein WhiA</fullName>
    </recommendedName>
</protein>